<evidence type="ECO:0000255" key="1">
    <source>
        <dbReference type="HAMAP-Rule" id="MF_01727"/>
    </source>
</evidence>
<sequence length="344" mass="37856">MAAIELIDLKKNYGPVSAVKGINLTVADGEMIVLVGPSGCGKSTLLRMIAGLEAISSGHLRIAGSDVGHVDPADRNIAMVFQNYALYPHMTVRQNLEYGLKNRRVARGEIERRIANAASILEIGEFLERRPRQLSGGQRQRVAMGRAIVRDPAAFLFDEPLSNLDAKLRVQMRVEIRRLQRQLKTTSLYVTHDQLEAMTLADRLVVMNGGRIEQIGTPIEVYRRPETVFVAGFIGSPPMNLIDLDQLGPCQLALPRDTDVIGIRPSAINLGSGSAHDLRFDAFVELIETVGDENNVHLRIDGADKRVVASISTNQPLQEGDRISCHVGMDGLHPFNRATGRRTD</sequence>
<dbReference type="EC" id="7.6.2.10" evidence="1"/>
<dbReference type="EMBL" id="AM236083">
    <property type="protein sequence ID" value="CAK03825.1"/>
    <property type="molecule type" value="Genomic_DNA"/>
</dbReference>
<dbReference type="RefSeq" id="WP_011649640.1">
    <property type="nucleotide sequence ID" value="NC_008379.1"/>
</dbReference>
<dbReference type="SMR" id="Q1M8R6"/>
<dbReference type="EnsemblBacteria" id="CAK03825">
    <property type="protein sequence ID" value="CAK03825"/>
    <property type="gene ID" value="pRL90110"/>
</dbReference>
<dbReference type="KEGG" id="rle:pRL90110"/>
<dbReference type="HOGENOM" id="CLU_000604_1_1_5"/>
<dbReference type="Proteomes" id="UP000006575">
    <property type="component" value="Plasmid pRL9"/>
</dbReference>
<dbReference type="GO" id="GO:0055052">
    <property type="term" value="C:ATP-binding cassette (ABC) transporter complex, substrate-binding subunit-containing"/>
    <property type="evidence" value="ECO:0007669"/>
    <property type="project" value="TreeGrafter"/>
</dbReference>
<dbReference type="GO" id="GO:0015430">
    <property type="term" value="F:ABC-type glycerol-3-phosphate transporter activity"/>
    <property type="evidence" value="ECO:0007669"/>
    <property type="project" value="UniProtKB-EC"/>
</dbReference>
<dbReference type="GO" id="GO:0005524">
    <property type="term" value="F:ATP binding"/>
    <property type="evidence" value="ECO:0007669"/>
    <property type="project" value="UniProtKB-KW"/>
</dbReference>
<dbReference type="GO" id="GO:0016887">
    <property type="term" value="F:ATP hydrolysis activity"/>
    <property type="evidence" value="ECO:0007669"/>
    <property type="project" value="InterPro"/>
</dbReference>
<dbReference type="GO" id="GO:0008643">
    <property type="term" value="P:carbohydrate transport"/>
    <property type="evidence" value="ECO:0007669"/>
    <property type="project" value="InterPro"/>
</dbReference>
<dbReference type="GO" id="GO:0001407">
    <property type="term" value="P:glycerophosphodiester transmembrane transport"/>
    <property type="evidence" value="ECO:0007669"/>
    <property type="project" value="TreeGrafter"/>
</dbReference>
<dbReference type="CDD" id="cd03301">
    <property type="entry name" value="ABC_MalK_N"/>
    <property type="match status" value="1"/>
</dbReference>
<dbReference type="FunFam" id="3.40.50.300:FF:000042">
    <property type="entry name" value="Maltose/maltodextrin ABC transporter, ATP-binding protein"/>
    <property type="match status" value="1"/>
</dbReference>
<dbReference type="Gene3D" id="2.40.50.100">
    <property type="match status" value="2"/>
</dbReference>
<dbReference type="Gene3D" id="2.40.50.140">
    <property type="entry name" value="Nucleic acid-binding proteins"/>
    <property type="match status" value="1"/>
</dbReference>
<dbReference type="Gene3D" id="3.40.50.300">
    <property type="entry name" value="P-loop containing nucleotide triphosphate hydrolases"/>
    <property type="match status" value="1"/>
</dbReference>
<dbReference type="InterPro" id="IPR003593">
    <property type="entry name" value="AAA+_ATPase"/>
</dbReference>
<dbReference type="InterPro" id="IPR003439">
    <property type="entry name" value="ABC_transporter-like_ATP-bd"/>
</dbReference>
<dbReference type="InterPro" id="IPR017871">
    <property type="entry name" value="ABC_transporter-like_CS"/>
</dbReference>
<dbReference type="InterPro" id="IPR015855">
    <property type="entry name" value="ABC_transpr_MalK-like"/>
</dbReference>
<dbReference type="InterPro" id="IPR047641">
    <property type="entry name" value="ABC_transpr_MalK/UgpC-like"/>
</dbReference>
<dbReference type="InterPro" id="IPR008995">
    <property type="entry name" value="Mo/tungstate-bd_C_term_dom"/>
</dbReference>
<dbReference type="InterPro" id="IPR012340">
    <property type="entry name" value="NA-bd_OB-fold"/>
</dbReference>
<dbReference type="InterPro" id="IPR027417">
    <property type="entry name" value="P-loop_NTPase"/>
</dbReference>
<dbReference type="InterPro" id="IPR013611">
    <property type="entry name" value="Transp-assoc_OB_typ2"/>
</dbReference>
<dbReference type="NCBIfam" id="NF008653">
    <property type="entry name" value="PRK11650.1"/>
    <property type="match status" value="1"/>
</dbReference>
<dbReference type="PANTHER" id="PTHR43875">
    <property type="entry name" value="MALTODEXTRIN IMPORT ATP-BINDING PROTEIN MSMX"/>
    <property type="match status" value="1"/>
</dbReference>
<dbReference type="PANTHER" id="PTHR43875:SF12">
    <property type="entry name" value="SN-GLYCEROL-3-PHOSPHATE IMPORT ATP-BINDING PROTEIN UGPC"/>
    <property type="match status" value="1"/>
</dbReference>
<dbReference type="Pfam" id="PF00005">
    <property type="entry name" value="ABC_tran"/>
    <property type="match status" value="1"/>
</dbReference>
<dbReference type="Pfam" id="PF08402">
    <property type="entry name" value="TOBE_2"/>
    <property type="match status" value="1"/>
</dbReference>
<dbReference type="SMART" id="SM00382">
    <property type="entry name" value="AAA"/>
    <property type="match status" value="1"/>
</dbReference>
<dbReference type="SUPFAM" id="SSF50331">
    <property type="entry name" value="MOP-like"/>
    <property type="match status" value="1"/>
</dbReference>
<dbReference type="SUPFAM" id="SSF52540">
    <property type="entry name" value="P-loop containing nucleoside triphosphate hydrolases"/>
    <property type="match status" value="1"/>
</dbReference>
<dbReference type="PROSITE" id="PS00211">
    <property type="entry name" value="ABC_TRANSPORTER_1"/>
    <property type="match status" value="1"/>
</dbReference>
<dbReference type="PROSITE" id="PS50893">
    <property type="entry name" value="ABC_TRANSPORTER_2"/>
    <property type="match status" value="1"/>
</dbReference>
<dbReference type="PROSITE" id="PS51315">
    <property type="entry name" value="UGPC"/>
    <property type="match status" value="1"/>
</dbReference>
<keyword id="KW-0067">ATP-binding</keyword>
<keyword id="KW-0997">Cell inner membrane</keyword>
<keyword id="KW-1003">Cell membrane</keyword>
<keyword id="KW-0472">Membrane</keyword>
<keyword id="KW-0547">Nucleotide-binding</keyword>
<keyword id="KW-0614">Plasmid</keyword>
<keyword id="KW-0762">Sugar transport</keyword>
<keyword id="KW-1278">Translocase</keyword>
<keyword id="KW-0813">Transport</keyword>
<gene>
    <name evidence="1" type="primary">ugpC2</name>
    <name type="ordered locus">pRL90110</name>
</gene>
<name>UGPC2_RHIJ3</name>
<accession>Q1M8R6</accession>
<organism>
    <name type="scientific">Rhizobium johnstonii (strain DSM 114642 / LMG 32736 / 3841)</name>
    <name type="common">Rhizobium leguminosarum bv. viciae</name>
    <dbReference type="NCBI Taxonomy" id="216596"/>
    <lineage>
        <taxon>Bacteria</taxon>
        <taxon>Pseudomonadati</taxon>
        <taxon>Pseudomonadota</taxon>
        <taxon>Alphaproteobacteria</taxon>
        <taxon>Hyphomicrobiales</taxon>
        <taxon>Rhizobiaceae</taxon>
        <taxon>Rhizobium/Agrobacterium group</taxon>
        <taxon>Rhizobium</taxon>
        <taxon>Rhizobium johnstonii</taxon>
    </lineage>
</organism>
<protein>
    <recommendedName>
        <fullName evidence="1">sn-glycerol-3-phosphate import ATP-binding protein UgpC 2</fullName>
        <ecNumber evidence="1">7.6.2.10</ecNumber>
    </recommendedName>
</protein>
<reference key="1">
    <citation type="journal article" date="2006" name="Genome Biol.">
        <title>The genome of Rhizobium leguminosarum has recognizable core and accessory components.</title>
        <authorList>
            <person name="Young J.P.W."/>
            <person name="Crossman L.C."/>
            <person name="Johnston A.W.B."/>
            <person name="Thomson N.R."/>
            <person name="Ghazoui Z.F."/>
            <person name="Hull K.H."/>
            <person name="Wexler M."/>
            <person name="Curson A.R.J."/>
            <person name="Todd J.D."/>
            <person name="Poole P.S."/>
            <person name="Mauchline T.H."/>
            <person name="East A.K."/>
            <person name="Quail M.A."/>
            <person name="Churcher C."/>
            <person name="Arrowsmith C."/>
            <person name="Cherevach I."/>
            <person name="Chillingworth T."/>
            <person name="Clarke K."/>
            <person name="Cronin A."/>
            <person name="Davis P."/>
            <person name="Fraser A."/>
            <person name="Hance Z."/>
            <person name="Hauser H."/>
            <person name="Jagels K."/>
            <person name="Moule S."/>
            <person name="Mungall K."/>
            <person name="Norbertczak H."/>
            <person name="Rabbinowitsch E."/>
            <person name="Sanders M."/>
            <person name="Simmonds M."/>
            <person name="Whitehead S."/>
            <person name="Parkhill J."/>
        </authorList>
    </citation>
    <scope>NUCLEOTIDE SEQUENCE [LARGE SCALE GENOMIC DNA]</scope>
    <source>
        <strain>DSM 114642 / LMG 32736 / 3841</strain>
    </source>
</reference>
<geneLocation type="plasmid">
    <name>pRL9</name>
</geneLocation>
<comment type="function">
    <text evidence="1">Part of the ABC transporter complex UgpBAEC involved in sn-glycerol-3-phosphate (G3P) import. Responsible for energy coupling to the transport system.</text>
</comment>
<comment type="catalytic activity">
    <reaction evidence="1">
        <text>sn-glycerol 3-phosphate(out) + ATP + H2O = sn-glycerol 3-phosphate(in) + ADP + phosphate + H(+)</text>
        <dbReference type="Rhea" id="RHEA:21668"/>
        <dbReference type="ChEBI" id="CHEBI:15377"/>
        <dbReference type="ChEBI" id="CHEBI:15378"/>
        <dbReference type="ChEBI" id="CHEBI:30616"/>
        <dbReference type="ChEBI" id="CHEBI:43474"/>
        <dbReference type="ChEBI" id="CHEBI:57597"/>
        <dbReference type="ChEBI" id="CHEBI:456216"/>
        <dbReference type="EC" id="7.6.2.10"/>
    </reaction>
</comment>
<comment type="subunit">
    <text evidence="1">The complex is composed of two ATP-binding proteins (UgpC), two transmembrane proteins (UgpA and UgpE) and a solute-binding protein (UgpB).</text>
</comment>
<comment type="subcellular location">
    <subcellularLocation>
        <location evidence="1">Cell inner membrane</location>
        <topology evidence="1">Peripheral membrane protein</topology>
    </subcellularLocation>
</comment>
<comment type="similarity">
    <text evidence="1">Belongs to the ABC transporter superfamily. sn-glycerol-3-phosphate importer (TC 3.A.1.1.3) family.</text>
</comment>
<feature type="chain" id="PRO_0000289766" description="sn-glycerol-3-phosphate import ATP-binding protein UgpC 2">
    <location>
        <begin position="1"/>
        <end position="344"/>
    </location>
</feature>
<feature type="domain" description="ABC transporter" evidence="1">
    <location>
        <begin position="4"/>
        <end position="234"/>
    </location>
</feature>
<feature type="binding site" evidence="1">
    <location>
        <begin position="36"/>
        <end position="43"/>
    </location>
    <ligand>
        <name>ATP</name>
        <dbReference type="ChEBI" id="CHEBI:30616"/>
    </ligand>
</feature>
<proteinExistence type="inferred from homology"/>